<name>EXPL5_DICDI</name>
<evidence type="ECO:0000255" key="1"/>
<evidence type="ECO:0000255" key="2">
    <source>
        <dbReference type="PROSITE-ProRule" id="PRU00079"/>
    </source>
</evidence>
<evidence type="ECO:0000269" key="3">
    <source>
    </source>
</evidence>
<evidence type="ECO:0000269" key="4">
    <source>
    </source>
</evidence>
<evidence type="ECO:0000305" key="5"/>
<comment type="function">
    <text evidence="3 4">May serve to lubricate the movement of the cellulose microfibrils during cell growth and wall extension and/or may serve to maintain the fluid state of the slug cell wall.</text>
</comment>
<comment type="subcellular location">
    <subcellularLocation>
        <location evidence="4">Secreted</location>
    </subcellularLocation>
</comment>
<comment type="developmental stage">
    <text evidence="4">No detectable expression.</text>
</comment>
<comment type="similarity">
    <text evidence="5">Belongs to the expansin family. Expansin A subfamily.</text>
</comment>
<sequence length="238" mass="25544">MRINFKLILIILTSFYGIINCQSTCPYSKTVINGASATFYSAMDNGNCGFGKLTGPTGPGNYMIAALGTKLYQNGAQCGQCFKISNSKNASVTVMATDSCNDAGYCQRDNHFDLSPTAFSILGAQSQGVLDGLSYVKVPCRVSGNVKVMLKDGSNAYWTSFLVFNNAIDVKQVSIKLSGSSTYVPLTQTTYNYWPSSITAGSFQVRIESIGGEFIYVTIPSVVSSKIYDTGSQFSSSC</sequence>
<proteinExistence type="evidence at transcript level"/>
<dbReference type="EMBL" id="AAFI02000019">
    <property type="protein sequence ID" value="EAL68970.1"/>
    <property type="molecule type" value="Genomic_DNA"/>
</dbReference>
<dbReference type="RefSeq" id="XP_642827.1">
    <property type="nucleotide sequence ID" value="XM_637735.1"/>
</dbReference>
<dbReference type="SMR" id="Q86AV4"/>
<dbReference type="STRING" id="44689.Q86AV4"/>
<dbReference type="CAZy" id="CBM63">
    <property type="family name" value="Carbohydrate-Binding Module Family 63"/>
</dbReference>
<dbReference type="GlyCosmos" id="Q86AV4">
    <property type="glycosylation" value="1 site, No reported glycans"/>
</dbReference>
<dbReference type="GlyGen" id="Q86AV4">
    <property type="glycosylation" value="2 sites"/>
</dbReference>
<dbReference type="PaxDb" id="44689-DDB0231627"/>
<dbReference type="EnsemblProtists" id="EAL68970">
    <property type="protein sequence ID" value="EAL68970"/>
    <property type="gene ID" value="DDB_G0276937"/>
</dbReference>
<dbReference type="GeneID" id="8620690"/>
<dbReference type="KEGG" id="ddi:DDB_G0276937"/>
<dbReference type="dictyBase" id="DDB_G0276937">
    <property type="gene designation" value="expl5"/>
</dbReference>
<dbReference type="VEuPathDB" id="AmoebaDB:DDB_G0276937"/>
<dbReference type="eggNOG" id="ENOG502S9SU">
    <property type="taxonomic scope" value="Eukaryota"/>
</dbReference>
<dbReference type="HOGENOM" id="CLU_071727_0_0_1"/>
<dbReference type="InParanoid" id="Q86AV4"/>
<dbReference type="OMA" id="DNAGASC"/>
<dbReference type="PhylomeDB" id="Q86AV4"/>
<dbReference type="PRO" id="PR:Q86AV4"/>
<dbReference type="Proteomes" id="UP000002195">
    <property type="component" value="Chromosome 2"/>
</dbReference>
<dbReference type="GO" id="GO:0005576">
    <property type="term" value="C:extracellular region"/>
    <property type="evidence" value="ECO:0007669"/>
    <property type="project" value="UniProtKB-SubCell"/>
</dbReference>
<dbReference type="CDD" id="cd22271">
    <property type="entry name" value="DPBB_EXP_N-like"/>
    <property type="match status" value="1"/>
</dbReference>
<dbReference type="Gene3D" id="2.60.40.760">
    <property type="entry name" value="Expansin, cellulose-binding-like domain"/>
    <property type="match status" value="1"/>
</dbReference>
<dbReference type="Gene3D" id="2.40.40.10">
    <property type="entry name" value="RlpA-like domain"/>
    <property type="match status" value="1"/>
</dbReference>
<dbReference type="InterPro" id="IPR007112">
    <property type="entry name" value="Expansin/allergen_DPBB_dom"/>
</dbReference>
<dbReference type="InterPro" id="IPR036749">
    <property type="entry name" value="Expansin_CBD_sf"/>
</dbReference>
<dbReference type="InterPro" id="IPR051477">
    <property type="entry name" value="Expansin_CellWall"/>
</dbReference>
<dbReference type="InterPro" id="IPR049818">
    <property type="entry name" value="Expansin_EXLX1-like"/>
</dbReference>
<dbReference type="InterPro" id="IPR009009">
    <property type="entry name" value="RlpA-like_DPBB"/>
</dbReference>
<dbReference type="InterPro" id="IPR036908">
    <property type="entry name" value="RlpA-like_sf"/>
</dbReference>
<dbReference type="NCBIfam" id="NF041144">
    <property type="entry name" value="expansin_EXLX1"/>
    <property type="match status" value="1"/>
</dbReference>
<dbReference type="PANTHER" id="PTHR31836">
    <property type="match status" value="1"/>
</dbReference>
<dbReference type="PANTHER" id="PTHR31836:SF2">
    <property type="entry name" value="EXPANSIN-LIKE PROTEIN 3-RELATED"/>
    <property type="match status" value="1"/>
</dbReference>
<dbReference type="Pfam" id="PF03330">
    <property type="entry name" value="DPBB_1"/>
    <property type="match status" value="1"/>
</dbReference>
<dbReference type="SMART" id="SM00837">
    <property type="entry name" value="DPBB_1"/>
    <property type="match status" value="1"/>
</dbReference>
<dbReference type="SUPFAM" id="SSF50685">
    <property type="entry name" value="Barwin-like endoglucanases"/>
    <property type="match status" value="1"/>
</dbReference>
<dbReference type="SUPFAM" id="SSF49590">
    <property type="entry name" value="PHL pollen allergen"/>
    <property type="match status" value="1"/>
</dbReference>
<dbReference type="PROSITE" id="PS50842">
    <property type="entry name" value="EXPANSIN_EG45"/>
    <property type="match status" value="1"/>
</dbReference>
<keyword id="KW-1015">Disulfide bond</keyword>
<keyword id="KW-0325">Glycoprotein</keyword>
<keyword id="KW-1185">Reference proteome</keyword>
<keyword id="KW-0964">Secreted</keyword>
<keyword id="KW-0732">Signal</keyword>
<reference key="1">
    <citation type="journal article" date="2002" name="Nature">
        <title>Sequence and analysis of chromosome 2 of Dictyostelium discoideum.</title>
        <authorList>
            <person name="Gloeckner G."/>
            <person name="Eichinger L."/>
            <person name="Szafranski K."/>
            <person name="Pachebat J.A."/>
            <person name="Bankier A.T."/>
            <person name="Dear P.H."/>
            <person name="Lehmann R."/>
            <person name="Baumgart C."/>
            <person name="Parra G."/>
            <person name="Abril J.F."/>
            <person name="Guigo R."/>
            <person name="Kumpf K."/>
            <person name="Tunggal B."/>
            <person name="Cox E.C."/>
            <person name="Quail M.A."/>
            <person name="Platzer M."/>
            <person name="Rosenthal A."/>
            <person name="Noegel A.A."/>
        </authorList>
    </citation>
    <scope>NUCLEOTIDE SEQUENCE [LARGE SCALE GENOMIC DNA]</scope>
    <source>
        <strain>AX4</strain>
    </source>
</reference>
<reference key="2">
    <citation type="journal article" date="2005" name="Nature">
        <title>The genome of the social amoeba Dictyostelium discoideum.</title>
        <authorList>
            <person name="Eichinger L."/>
            <person name="Pachebat J.A."/>
            <person name="Gloeckner G."/>
            <person name="Rajandream M.A."/>
            <person name="Sucgang R."/>
            <person name="Berriman M."/>
            <person name="Song J."/>
            <person name="Olsen R."/>
            <person name="Szafranski K."/>
            <person name="Xu Q."/>
            <person name="Tunggal B."/>
            <person name="Kummerfeld S."/>
            <person name="Madera M."/>
            <person name="Konfortov B.A."/>
            <person name="Rivero F."/>
            <person name="Bankier A.T."/>
            <person name="Lehmann R."/>
            <person name="Hamlin N."/>
            <person name="Davies R."/>
            <person name="Gaudet P."/>
            <person name="Fey P."/>
            <person name="Pilcher K."/>
            <person name="Chen G."/>
            <person name="Saunders D."/>
            <person name="Sodergren E.J."/>
            <person name="Davis P."/>
            <person name="Kerhornou A."/>
            <person name="Nie X."/>
            <person name="Hall N."/>
            <person name="Anjard C."/>
            <person name="Hemphill L."/>
            <person name="Bason N."/>
            <person name="Farbrother P."/>
            <person name="Desany B."/>
            <person name="Just E."/>
            <person name="Morio T."/>
            <person name="Rost R."/>
            <person name="Churcher C.M."/>
            <person name="Cooper J."/>
            <person name="Haydock S."/>
            <person name="van Driessche N."/>
            <person name="Cronin A."/>
            <person name="Goodhead I."/>
            <person name="Muzny D.M."/>
            <person name="Mourier T."/>
            <person name="Pain A."/>
            <person name="Lu M."/>
            <person name="Harper D."/>
            <person name="Lindsay R."/>
            <person name="Hauser H."/>
            <person name="James K.D."/>
            <person name="Quiles M."/>
            <person name="Madan Babu M."/>
            <person name="Saito T."/>
            <person name="Buchrieser C."/>
            <person name="Wardroper A."/>
            <person name="Felder M."/>
            <person name="Thangavelu M."/>
            <person name="Johnson D."/>
            <person name="Knights A."/>
            <person name="Loulseged H."/>
            <person name="Mungall K.L."/>
            <person name="Oliver K."/>
            <person name="Price C."/>
            <person name="Quail M.A."/>
            <person name="Urushihara H."/>
            <person name="Hernandez J."/>
            <person name="Rabbinowitsch E."/>
            <person name="Steffen D."/>
            <person name="Sanders M."/>
            <person name="Ma J."/>
            <person name="Kohara Y."/>
            <person name="Sharp S."/>
            <person name="Simmonds M.N."/>
            <person name="Spiegler S."/>
            <person name="Tivey A."/>
            <person name="Sugano S."/>
            <person name="White B."/>
            <person name="Walker D."/>
            <person name="Woodward J.R."/>
            <person name="Winckler T."/>
            <person name="Tanaka Y."/>
            <person name="Shaulsky G."/>
            <person name="Schleicher M."/>
            <person name="Weinstock G.M."/>
            <person name="Rosenthal A."/>
            <person name="Cox E.C."/>
            <person name="Chisholm R.L."/>
            <person name="Gibbs R.A."/>
            <person name="Loomis W.F."/>
            <person name="Platzer M."/>
            <person name="Kay R.R."/>
            <person name="Williams J.G."/>
            <person name="Dear P.H."/>
            <person name="Noegel A.A."/>
            <person name="Barrell B.G."/>
            <person name="Kuspa A."/>
        </authorList>
    </citation>
    <scope>NUCLEOTIDE SEQUENCE [LARGE SCALE GENOMIC DNA]</scope>
    <source>
        <strain>AX4</strain>
    </source>
</reference>
<reference key="3">
    <citation type="journal article" date="2003" name="FEBS Lett.">
        <title>Expression of a family of expansin-like proteins during the development of Dictyostelium discoideum.</title>
        <authorList>
            <person name="Darley C.P."/>
            <person name="Li Y."/>
            <person name="Schaap P."/>
            <person name="McQueen-Mason S.J."/>
        </authorList>
    </citation>
    <scope>SUBCELLULAR LOCATION</scope>
    <scope>DEVELOPMENTAL STAGE</scope>
    <scope>FUNCTION</scope>
</reference>
<reference key="4">
    <citation type="journal article" date="2002" name="Plant Physiol.">
        <title>Plant expansins are a complex multigene family with an ancient evolutionary origin.</title>
        <authorList>
            <person name="Li Y."/>
            <person name="Darley C.P."/>
            <person name="Ongaro V."/>
            <person name="Fleming A."/>
            <person name="Schipper O."/>
            <person name="Baldauf S.L."/>
            <person name="McQueen-Mason S.J."/>
        </authorList>
    </citation>
    <scope>FUNCTION</scope>
</reference>
<feature type="signal peptide" evidence="1">
    <location>
        <begin position="1"/>
        <end position="21"/>
    </location>
</feature>
<feature type="chain" id="PRO_0000368218" description="Expansin-like protein 5">
    <location>
        <begin position="22"/>
        <end position="238"/>
    </location>
</feature>
<feature type="domain" description="Expansin-like EG45" evidence="2">
    <location>
        <begin position="45"/>
        <end position="145"/>
    </location>
</feature>
<feature type="glycosylation site" description="N-linked (GlcNAc...) asparagine" evidence="1">
    <location>
        <position position="89"/>
    </location>
</feature>
<feature type="disulfide bond" evidence="2">
    <location>
        <begin position="48"/>
        <end position="78"/>
    </location>
</feature>
<feature type="disulfide bond" evidence="2">
    <location>
        <begin position="81"/>
        <end position="140"/>
    </location>
</feature>
<organism>
    <name type="scientific">Dictyostelium discoideum</name>
    <name type="common">Social amoeba</name>
    <dbReference type="NCBI Taxonomy" id="44689"/>
    <lineage>
        <taxon>Eukaryota</taxon>
        <taxon>Amoebozoa</taxon>
        <taxon>Evosea</taxon>
        <taxon>Eumycetozoa</taxon>
        <taxon>Dictyostelia</taxon>
        <taxon>Dictyosteliales</taxon>
        <taxon>Dictyosteliaceae</taxon>
        <taxon>Dictyostelium</taxon>
    </lineage>
</organism>
<protein>
    <recommendedName>
        <fullName>Expansin-like protein 5</fullName>
        <shortName>Ddexpl5</shortName>
    </recommendedName>
</protein>
<gene>
    <name type="primary">expl5</name>
    <name type="ORF">DDB_G0276937</name>
</gene>
<accession>Q86AV4</accession>
<accession>Q550V5</accession>